<keyword id="KW-0002">3D-structure</keyword>
<keyword id="KW-0025">Alternative splicing</keyword>
<keyword id="KW-1003">Cell membrane</keyword>
<keyword id="KW-1015">Disulfide bond</keyword>
<keyword id="KW-0325">Glycoprotein</keyword>
<keyword id="KW-0391">Immunity</keyword>
<keyword id="KW-0393">Immunoglobulin domain</keyword>
<keyword id="KW-0472">Membrane</keyword>
<keyword id="KW-1267">Proteomics identification</keyword>
<keyword id="KW-0675">Receptor</keyword>
<keyword id="KW-1185">Reference proteome</keyword>
<keyword id="KW-0732">Signal</keyword>
<keyword id="KW-0812">Transmembrane</keyword>
<keyword id="KW-1133">Transmembrane helix</keyword>
<protein>
    <recommendedName>
        <fullName evidence="17">Natural cytotoxicity triggering receptor 3</fullName>
    </recommendedName>
    <alternativeName>
        <fullName>Activating natural killer receptor p30</fullName>
    </alternativeName>
    <alternativeName>
        <fullName>Natural killer cell p30-related protein</fullName>
        <shortName>NK-p30</shortName>
        <shortName>NKp30</shortName>
    </alternativeName>
    <cdAntigenName>CD337</cdAntigenName>
</protein>
<organism>
    <name type="scientific">Homo sapiens</name>
    <name type="common">Human</name>
    <dbReference type="NCBI Taxonomy" id="9606"/>
    <lineage>
        <taxon>Eukaryota</taxon>
        <taxon>Metazoa</taxon>
        <taxon>Chordata</taxon>
        <taxon>Craniata</taxon>
        <taxon>Vertebrata</taxon>
        <taxon>Euteleostomi</taxon>
        <taxon>Mammalia</taxon>
        <taxon>Eutheria</taxon>
        <taxon>Euarchontoglires</taxon>
        <taxon>Primates</taxon>
        <taxon>Haplorrhini</taxon>
        <taxon>Catarrhini</taxon>
        <taxon>Hominidae</taxon>
        <taxon>Homo</taxon>
    </lineage>
</organism>
<sequence>MAWMLLLILIMVHPGSCALWVSQPPEIRTLEGSSAFLPCSFNASQGRLAIGSVTWFRDEVVPGKEVRNGTPEFRGRLAPLASSRFLHDHQAELHIRDVRGHDASIYVCRVEVLGLGVGTGNGTRLVVEKEHPQLGAGTVLLLRAGFYAVSFLSVAVGSTVYYQGKCLTWKGPRRQLPAVVPAPLPPPCGSSAHLLPPVPGG</sequence>
<feature type="signal peptide" evidence="1">
    <location>
        <begin position="1"/>
        <end position="18"/>
    </location>
</feature>
<feature type="chain" id="PRO_0000015032" description="Natural cytotoxicity triggering receptor 3">
    <location>
        <begin position="19"/>
        <end position="201"/>
    </location>
</feature>
<feature type="topological domain" description="Extracellular" evidence="1">
    <location>
        <begin position="19"/>
        <end position="135"/>
    </location>
</feature>
<feature type="transmembrane region" description="Helical" evidence="1">
    <location>
        <begin position="136"/>
        <end position="156"/>
    </location>
</feature>
<feature type="topological domain" description="Cytoplasmic" evidence="1">
    <location>
        <begin position="157"/>
        <end position="201"/>
    </location>
</feature>
<feature type="domain" description="Ig-like">
    <location>
        <begin position="19"/>
        <end position="126"/>
    </location>
</feature>
<feature type="glycosylation site" description="N-linked (GlcNAc...) asparagine" evidence="1">
    <location>
        <position position="42"/>
    </location>
</feature>
<feature type="glycosylation site" description="N-linked (GlcNAc...) asparagine" evidence="1">
    <location>
        <position position="121"/>
    </location>
</feature>
<feature type="disulfide bond" evidence="2 9 10">
    <location>
        <begin position="39"/>
        <end position="108"/>
    </location>
</feature>
<feature type="splice variant" id="VSP_010411" description="In isoform 4, isoform 5 and isoform 6." evidence="13">
    <location>
        <begin position="66"/>
        <end position="90"/>
    </location>
</feature>
<feature type="splice variant" id="VSP_010412" description="In isoform 3 and isoform 6." evidence="13 15">
    <original>CLTWKGPRRQLPAVVPAPLPPPCGSSAHLLPPVPGG</original>
    <variation>YAKSTLSGFPQL</variation>
    <location>
        <begin position="166"/>
        <end position="201"/>
    </location>
</feature>
<feature type="splice variant" id="VSP_010413" description="In isoform 2 and isoform 5." evidence="13 14 15 16">
    <original>LTWKGPRRQLPAVVPAPLPPPCGSSAHLLPPVPGG</original>
    <variation>HCHMGTHCHSSDGPRGVIPEPRCP</variation>
    <location>
        <begin position="167"/>
        <end position="201"/>
    </location>
</feature>
<feature type="sequence variant" id="VAR_044114" description="In dbSNP:rs11575840.">
    <original>A</original>
    <variation>T</variation>
    <location>
        <position position="103"/>
    </location>
</feature>
<feature type="sequence variant" id="VAR_044115" description="In dbSNP:rs3179003.">
    <original>R</original>
    <variation>S</variation>
    <location>
        <position position="174"/>
    </location>
</feature>
<feature type="strand" evidence="19">
    <location>
        <begin position="25"/>
        <end position="30"/>
    </location>
</feature>
<feature type="strand" evidence="19">
    <location>
        <begin position="35"/>
        <end position="37"/>
    </location>
</feature>
<feature type="strand" evidence="19">
    <location>
        <begin position="51"/>
        <end position="59"/>
    </location>
</feature>
<feature type="helix" evidence="20">
    <location>
        <begin position="62"/>
        <end position="64"/>
    </location>
</feature>
<feature type="helix" evidence="20">
    <location>
        <begin position="66"/>
        <end position="68"/>
    </location>
</feature>
<feature type="turn" evidence="19">
    <location>
        <begin position="71"/>
        <end position="75"/>
    </location>
</feature>
<feature type="helix" evidence="19">
    <location>
        <begin position="82"/>
        <end position="86"/>
    </location>
</feature>
<feature type="strand" evidence="19">
    <location>
        <begin position="93"/>
        <end position="97"/>
    </location>
</feature>
<feature type="helix" evidence="19">
    <location>
        <begin position="100"/>
        <end position="102"/>
    </location>
</feature>
<feature type="strand" evidence="19">
    <location>
        <begin position="104"/>
        <end position="112"/>
    </location>
</feature>
<feature type="turn" evidence="19">
    <location>
        <begin position="113"/>
        <end position="115"/>
    </location>
</feature>
<feature type="strand" evidence="19">
    <location>
        <begin position="116"/>
        <end position="119"/>
    </location>
</feature>
<feature type="strand" evidence="19">
    <location>
        <begin position="123"/>
        <end position="128"/>
    </location>
</feature>
<accession>O14931</accession>
<accession>B0S8F2</accession>
<accession>B0S8F4</accession>
<accession>B0S8F5</accession>
<accession>O14930</accession>
<accession>O14932</accession>
<accession>O95667</accession>
<accession>O95668</accession>
<accession>O95669</accession>
<accession>Q5ST89</accession>
<accession>Q5ST90</accession>
<accession>Q5ST91</accession>
<accession>Q5ST92</accession>
<accession>Q5STA3</accession>
<dbReference type="EMBL" id="AJ223153">
    <property type="protein sequence ID" value="CAB54004.1"/>
    <property type="molecule type" value="mRNA"/>
</dbReference>
<dbReference type="EMBL" id="AB055881">
    <property type="protein sequence ID" value="BAB78472.1"/>
    <property type="molecule type" value="mRNA"/>
</dbReference>
<dbReference type="EMBL" id="Y14768">
    <property type="protein sequence ID" value="CAA75063.1"/>
    <property type="molecule type" value="Genomic_DNA"/>
</dbReference>
<dbReference type="EMBL" id="Y14768">
    <property type="protein sequence ID" value="CAA75064.1"/>
    <property type="molecule type" value="Genomic_DNA"/>
</dbReference>
<dbReference type="EMBL" id="Y14768">
    <property type="protein sequence ID" value="CAA75065.1"/>
    <property type="molecule type" value="Genomic_DNA"/>
</dbReference>
<dbReference type="EMBL" id="Y14768">
    <property type="protein sequence ID" value="CAA75066.1"/>
    <property type="molecule type" value="Genomic_DNA"/>
</dbReference>
<dbReference type="EMBL" id="Y14768">
    <property type="protein sequence ID" value="CAA75067.1"/>
    <property type="molecule type" value="Genomic_DNA"/>
</dbReference>
<dbReference type="EMBL" id="Y14768">
    <property type="protein sequence ID" value="CAA75068.1"/>
    <property type="molecule type" value="Genomic_DNA"/>
</dbReference>
<dbReference type="EMBL" id="AF031136">
    <property type="protein sequence ID" value="AAB86578.1"/>
    <property type="molecule type" value="mRNA"/>
</dbReference>
<dbReference type="EMBL" id="AF031137">
    <property type="protein sequence ID" value="AAB86579.1"/>
    <property type="molecule type" value="mRNA"/>
</dbReference>
<dbReference type="EMBL" id="AF031138">
    <property type="protein sequence ID" value="AAB86580.1"/>
    <property type="molecule type" value="mRNA"/>
</dbReference>
<dbReference type="EMBL" id="AF129756">
    <property type="protein sequence ID" value="AAD18088.1"/>
    <property type="molecule type" value="Genomic_DNA"/>
</dbReference>
<dbReference type="EMBL" id="BA000025">
    <property type="protein sequence ID" value="BAB63393.1"/>
    <property type="molecule type" value="Genomic_DNA"/>
</dbReference>
<dbReference type="EMBL" id="AL662801">
    <property type="status" value="NOT_ANNOTATED_CDS"/>
    <property type="molecule type" value="Genomic_DNA"/>
</dbReference>
<dbReference type="EMBL" id="AL662847">
    <property type="status" value="NOT_ANNOTATED_CDS"/>
    <property type="molecule type" value="Genomic_DNA"/>
</dbReference>
<dbReference type="EMBL" id="AL929587">
    <property type="status" value="NOT_ANNOTATED_CDS"/>
    <property type="molecule type" value="Genomic_DNA"/>
</dbReference>
<dbReference type="EMBL" id="BX248519">
    <property type="status" value="NOT_ANNOTATED_CDS"/>
    <property type="molecule type" value="Genomic_DNA"/>
</dbReference>
<dbReference type="EMBL" id="BX927320">
    <property type="status" value="NOT_ANNOTATED_CDS"/>
    <property type="molecule type" value="Genomic_DNA"/>
</dbReference>
<dbReference type="EMBL" id="CR753892">
    <property type="status" value="NOT_ANNOTATED_CDS"/>
    <property type="molecule type" value="Genomic_DNA"/>
</dbReference>
<dbReference type="EMBL" id="CR759886">
    <property type="status" value="NOT_ANNOTATED_CDS"/>
    <property type="molecule type" value="Genomic_DNA"/>
</dbReference>
<dbReference type="EMBL" id="CR759905">
    <property type="status" value="NOT_ANNOTATED_CDS"/>
    <property type="molecule type" value="Genomic_DNA"/>
</dbReference>
<dbReference type="EMBL" id="CR942185">
    <property type="status" value="NOT_ANNOTATED_CDS"/>
    <property type="molecule type" value="Genomic_DNA"/>
</dbReference>
<dbReference type="EMBL" id="CH471081">
    <property type="protein sequence ID" value="EAX03439.1"/>
    <property type="molecule type" value="Genomic_DNA"/>
</dbReference>
<dbReference type="EMBL" id="CH471081">
    <property type="protein sequence ID" value="EAX03440.1"/>
    <property type="molecule type" value="Genomic_DNA"/>
</dbReference>
<dbReference type="EMBL" id="BC052582">
    <property type="protein sequence ID" value="AAH52582.1"/>
    <property type="molecule type" value="mRNA"/>
</dbReference>
<dbReference type="CCDS" id="CCDS34397.1">
    <molecule id="O14931-1"/>
</dbReference>
<dbReference type="CCDS" id="CCDS47401.1">
    <molecule id="O14931-3"/>
</dbReference>
<dbReference type="CCDS" id="CCDS47402.1">
    <molecule id="O14931-2"/>
</dbReference>
<dbReference type="RefSeq" id="NP_001138938.1">
    <molecule id="O14931-3"/>
    <property type="nucleotide sequence ID" value="NM_001145466.2"/>
</dbReference>
<dbReference type="RefSeq" id="NP_001138939.1">
    <molecule id="O14931-2"/>
    <property type="nucleotide sequence ID" value="NM_001145467.2"/>
</dbReference>
<dbReference type="RefSeq" id="NP_667341.1">
    <molecule id="O14931-1"/>
    <property type="nucleotide sequence ID" value="NM_147130.3"/>
</dbReference>
<dbReference type="RefSeq" id="XP_006715112.1">
    <molecule id="O14931-1"/>
    <property type="nucleotide sequence ID" value="XM_006715049.4"/>
</dbReference>
<dbReference type="RefSeq" id="XP_011512761.1">
    <molecule id="O14931-4"/>
    <property type="nucleotide sequence ID" value="XM_011514459.3"/>
</dbReference>
<dbReference type="RefSeq" id="XP_054184436.1">
    <molecule id="O14931-1"/>
    <property type="nucleotide sequence ID" value="XM_054328461.1"/>
</dbReference>
<dbReference type="RefSeq" id="XP_054184437.1">
    <molecule id="O14931-4"/>
    <property type="nucleotide sequence ID" value="XM_054328462.1"/>
</dbReference>
<dbReference type="RefSeq" id="XP_054185736.1">
    <molecule id="O14931-1"/>
    <property type="nucleotide sequence ID" value="XM_054329761.1"/>
</dbReference>
<dbReference type="RefSeq" id="XP_054185739.1">
    <molecule id="O14931-4"/>
    <property type="nucleotide sequence ID" value="XM_054329764.1"/>
</dbReference>
<dbReference type="RefSeq" id="XP_054186226.1">
    <molecule id="O14931-1"/>
    <property type="nucleotide sequence ID" value="XM_054330251.1"/>
</dbReference>
<dbReference type="RefSeq" id="XP_054186227.1">
    <molecule id="O14931-4"/>
    <property type="nucleotide sequence ID" value="XM_054330252.1"/>
</dbReference>
<dbReference type="RefSeq" id="XP_054186518.1">
    <molecule id="O14931-1"/>
    <property type="nucleotide sequence ID" value="XM_054330543.1"/>
</dbReference>
<dbReference type="RefSeq" id="XP_054186519.1">
    <molecule id="O14931-4"/>
    <property type="nucleotide sequence ID" value="XM_054330544.1"/>
</dbReference>
<dbReference type="RefSeq" id="XP_054186769.1">
    <molecule id="O14931-4"/>
    <property type="nucleotide sequence ID" value="XM_054330794.1"/>
</dbReference>
<dbReference type="RefSeq" id="XP_054187006.1">
    <molecule id="O14931-1"/>
    <property type="nucleotide sequence ID" value="XM_054331031.1"/>
</dbReference>
<dbReference type="RefSeq" id="XP_054187007.1">
    <molecule id="O14931-4"/>
    <property type="nucleotide sequence ID" value="XM_054331032.1"/>
</dbReference>
<dbReference type="RefSeq" id="XP_054187266.1">
    <molecule id="O14931-1"/>
    <property type="nucleotide sequence ID" value="XM_054331291.1"/>
</dbReference>
<dbReference type="RefSeq" id="XP_054187269.1">
    <molecule id="O14931-4"/>
    <property type="nucleotide sequence ID" value="XM_054331294.1"/>
</dbReference>
<dbReference type="RefSeq" id="XP_054211097.1">
    <molecule id="O14931-1"/>
    <property type="nucleotide sequence ID" value="XM_054355122.1"/>
</dbReference>
<dbReference type="RefSeq" id="XP_054211100.1">
    <molecule id="O14931-4"/>
    <property type="nucleotide sequence ID" value="XM_054355125.1"/>
</dbReference>
<dbReference type="PDB" id="3NOI">
    <property type="method" value="X-ray"/>
    <property type="resolution" value="1.84 A"/>
    <property type="chains" value="A/B=18-130"/>
</dbReference>
<dbReference type="PDB" id="3PV6">
    <property type="method" value="X-ray"/>
    <property type="resolution" value="2.30 A"/>
    <property type="chains" value="B=19-135"/>
</dbReference>
<dbReference type="PDB" id="6YJP">
    <property type="method" value="X-ray"/>
    <property type="resolution" value="3.10 A"/>
    <property type="chains" value="A/B=19-130"/>
</dbReference>
<dbReference type="PDB" id="9FWW">
    <property type="method" value="X-ray"/>
    <property type="resolution" value="1.84 A"/>
    <property type="chains" value="A=19-130"/>
</dbReference>
<dbReference type="PDBsum" id="3NOI"/>
<dbReference type="PDBsum" id="3PV6"/>
<dbReference type="PDBsum" id="6YJP"/>
<dbReference type="PDBsum" id="9FWW"/>
<dbReference type="SMR" id="O14931"/>
<dbReference type="BioGRID" id="129224">
    <property type="interactions" value="141"/>
</dbReference>
<dbReference type="CORUM" id="O14931"/>
<dbReference type="DIP" id="DIP-59939N"/>
<dbReference type="FunCoup" id="O14931">
    <property type="interactions" value="822"/>
</dbReference>
<dbReference type="IntAct" id="O14931">
    <property type="interactions" value="121"/>
</dbReference>
<dbReference type="STRING" id="9606.ENSP00000342156"/>
<dbReference type="GlyCosmos" id="O14931">
    <property type="glycosylation" value="2 sites, No reported glycans"/>
</dbReference>
<dbReference type="GlyGen" id="O14931">
    <property type="glycosylation" value="2 sites"/>
</dbReference>
<dbReference type="BioMuta" id="NCR3"/>
<dbReference type="MassIVE" id="O14931"/>
<dbReference type="PaxDb" id="9606-ENSP00000342156"/>
<dbReference type="PeptideAtlas" id="O14931"/>
<dbReference type="Antibodypedia" id="49169">
    <property type="antibodies" value="477 antibodies from 30 providers"/>
</dbReference>
<dbReference type="DNASU" id="259197"/>
<dbReference type="Ensembl" id="ENST00000340027.10">
    <molecule id="O14931-1"/>
    <property type="protein sequence ID" value="ENSP00000342156.5"/>
    <property type="gene ID" value="ENSG00000204475.10"/>
</dbReference>
<dbReference type="Ensembl" id="ENST00000376071.4">
    <molecule id="O14931-5"/>
    <property type="protein sequence ID" value="ENSP00000365239.4"/>
    <property type="gene ID" value="ENSG00000204475.10"/>
</dbReference>
<dbReference type="Ensembl" id="ENST00000376072.7">
    <molecule id="O14931-2"/>
    <property type="protein sequence ID" value="ENSP00000365240.3"/>
    <property type="gene ID" value="ENSG00000204475.10"/>
</dbReference>
<dbReference type="Ensembl" id="ENST00000376073.8">
    <molecule id="O14931-3"/>
    <property type="protein sequence ID" value="ENSP00000365241.4"/>
    <property type="gene ID" value="ENSG00000204475.10"/>
</dbReference>
<dbReference type="Ensembl" id="ENST00000383476.6">
    <molecule id="O14931-2"/>
    <property type="protein sequence ID" value="ENSP00000372968.2"/>
    <property type="gene ID" value="ENSG00000206430.8"/>
</dbReference>
<dbReference type="Ensembl" id="ENST00000383477.8">
    <molecule id="O14931-1"/>
    <property type="protein sequence ID" value="ENSP00000372969.4"/>
    <property type="gene ID" value="ENSG00000206430.8"/>
</dbReference>
<dbReference type="Ensembl" id="ENST00000383478.8">
    <molecule id="O14931-3"/>
    <property type="protein sequence ID" value="ENSP00000372970.4"/>
    <property type="gene ID" value="ENSG00000206430.8"/>
</dbReference>
<dbReference type="Ensembl" id="ENST00000400241.7">
    <molecule id="O14931-5"/>
    <property type="protein sequence ID" value="ENSP00000383100.3"/>
    <property type="gene ID" value="ENSG00000206430.8"/>
</dbReference>
<dbReference type="Ensembl" id="ENST00000412603.5">
    <molecule id="O14931-2"/>
    <property type="protein sequence ID" value="ENSP00000389419.1"/>
    <property type="gene ID" value="ENSG00000225211.6"/>
</dbReference>
<dbReference type="Ensembl" id="ENST00000415123.6">
    <molecule id="O14931-1"/>
    <property type="protein sequence ID" value="ENSP00000416944.2"/>
    <property type="gene ID" value="ENSG00000237103.6"/>
</dbReference>
<dbReference type="Ensembl" id="ENST00000418936.6">
    <molecule id="O14931-2"/>
    <property type="protein sequence ID" value="ENSP00000402904.2"/>
    <property type="gene ID" value="ENSG00000237808.6"/>
</dbReference>
<dbReference type="Ensembl" id="ENST00000419086.6">
    <molecule id="O14931-5"/>
    <property type="protein sequence ID" value="ENSP00000416105.2"/>
    <property type="gene ID" value="ENSG00000223833.6"/>
</dbReference>
<dbReference type="Ensembl" id="ENST00000419728.6">
    <molecule id="O14931-5"/>
    <property type="protein sequence ID" value="ENSP00000406373.2"/>
    <property type="gene ID" value="ENSG00000236315.6"/>
</dbReference>
<dbReference type="Ensembl" id="ENST00000420485.6">
    <molecule id="O14931-5"/>
    <property type="protein sequence ID" value="ENSP00000412474.2"/>
    <property type="gene ID" value="ENSG00000237808.6"/>
</dbReference>
<dbReference type="Ensembl" id="ENST00000420556.6">
    <molecule id="O14931-1"/>
    <property type="protein sequence ID" value="ENSP00000405306.2"/>
    <property type="gene ID" value="ENSG00000236315.6"/>
</dbReference>
<dbReference type="Ensembl" id="ENST00000430599.6">
    <molecule id="O14931-1"/>
    <property type="protein sequence ID" value="ENSP00000416035.2"/>
    <property type="gene ID" value="ENSG00000236979.6"/>
</dbReference>
<dbReference type="Ensembl" id="ENST00000432392.6">
    <molecule id="O14931-3"/>
    <property type="protein sequence ID" value="ENSP00000409874.2"/>
    <property type="gene ID" value="ENSG00000236315.6"/>
</dbReference>
<dbReference type="Ensembl" id="ENST00000433654.6">
    <molecule id="O14931-3"/>
    <property type="protein sequence ID" value="ENSP00000391177.2"/>
    <property type="gene ID" value="ENSG00000237808.6"/>
</dbReference>
<dbReference type="Ensembl" id="ENST00000435674.6">
    <molecule id="O14931-1"/>
    <property type="protein sequence ID" value="ENSP00000390131.2"/>
    <property type="gene ID" value="ENSG00000225211.6"/>
</dbReference>
<dbReference type="Ensembl" id="ENST00000436253.6">
    <molecule id="O14931-3"/>
    <property type="protein sequence ID" value="ENSP00000395238.2"/>
    <property type="gene ID" value="ENSG00000223833.6"/>
</dbReference>
<dbReference type="Ensembl" id="ENST00000436623.5">
    <molecule id="O14931-2"/>
    <property type="protein sequence ID" value="ENSP00000404747.1"/>
    <property type="gene ID" value="ENSG00000237103.6"/>
</dbReference>
<dbReference type="Ensembl" id="ENST00000437517.6">
    <molecule id="O14931-1"/>
    <property type="protein sequence ID" value="ENSP00000398313.2"/>
    <property type="gene ID" value="ENSG00000223833.6"/>
</dbReference>
<dbReference type="Ensembl" id="ENST00000438663.6">
    <molecule id="O14931-5"/>
    <property type="protein sequence ID" value="ENSP00000415697.2"/>
    <property type="gene ID" value="ENSG00000225211.6"/>
</dbReference>
<dbReference type="Ensembl" id="ENST00000439584.6">
    <molecule id="O14931-3"/>
    <property type="protein sequence ID" value="ENSP00000408960.2"/>
    <property type="gene ID" value="ENSG00000237103.6"/>
</dbReference>
<dbReference type="Ensembl" id="ENST00000441372.5">
    <molecule id="O14931-2"/>
    <property type="protein sequence ID" value="ENSP00000399128.1"/>
    <property type="gene ID" value="ENSG00000236979.6"/>
</dbReference>
<dbReference type="Ensembl" id="ENST00000446756.6">
    <molecule id="O14931-3"/>
    <property type="protein sequence ID" value="ENSP00000411205.2"/>
    <property type="gene ID" value="ENSG00000236979.6"/>
</dbReference>
<dbReference type="Ensembl" id="ENST00000447248.6">
    <molecule id="O14931-1"/>
    <property type="protein sequence ID" value="ENSP00000389071.2"/>
    <property type="gene ID" value="ENSG00000237808.6"/>
</dbReference>
<dbReference type="Ensembl" id="ENST00000452296.6">
    <molecule id="O14931-2"/>
    <property type="protein sequence ID" value="ENSP00000403978.2"/>
    <property type="gene ID" value="ENSG00000223833.6"/>
</dbReference>
<dbReference type="Ensembl" id="ENST00000453657.6">
    <molecule id="O14931-5"/>
    <property type="protein sequence ID" value="ENSP00000409048.2"/>
    <property type="gene ID" value="ENSG00000236979.6"/>
</dbReference>
<dbReference type="Ensembl" id="ENST00000455448.6">
    <molecule id="O14931-5"/>
    <property type="protein sequence ID" value="ENSP00000415456.2"/>
    <property type="gene ID" value="ENSG00000237103.6"/>
</dbReference>
<dbReference type="Ensembl" id="ENST00000455825.6">
    <molecule id="O14931-3"/>
    <property type="protein sequence ID" value="ENSP00000389396.2"/>
    <property type="gene ID" value="ENSG00000225211.6"/>
</dbReference>
<dbReference type="Ensembl" id="ENST00000457547.5">
    <molecule id="O14931-2"/>
    <property type="protein sequence ID" value="ENSP00000412702.1"/>
    <property type="gene ID" value="ENSG00000236315.6"/>
</dbReference>
<dbReference type="GeneID" id="259197"/>
<dbReference type="KEGG" id="hsa:259197"/>
<dbReference type="MANE-Select" id="ENST00000340027.10">
    <property type="protein sequence ID" value="ENSP00000342156.5"/>
    <property type="RefSeq nucleotide sequence ID" value="NM_147130.3"/>
    <property type="RefSeq protein sequence ID" value="NP_667341.1"/>
</dbReference>
<dbReference type="UCSC" id="uc003nuv.3">
    <molecule id="O14931-1"/>
    <property type="organism name" value="human"/>
</dbReference>
<dbReference type="AGR" id="HGNC:19077"/>
<dbReference type="CTD" id="259197"/>
<dbReference type="DisGeNET" id="259197"/>
<dbReference type="GeneCards" id="NCR3"/>
<dbReference type="HGNC" id="HGNC:19077">
    <property type="gene designation" value="NCR3"/>
</dbReference>
<dbReference type="HPA" id="ENSG00000204475">
    <property type="expression patterns" value="Group enriched (bone marrow, intestine, lymphoid tissue)"/>
</dbReference>
<dbReference type="MalaCards" id="NCR3"/>
<dbReference type="MIM" id="609148">
    <property type="type" value="phenotype"/>
</dbReference>
<dbReference type="MIM" id="611550">
    <property type="type" value="gene"/>
</dbReference>
<dbReference type="neXtProt" id="NX_O14931"/>
<dbReference type="OpenTargets" id="ENSG00000204475"/>
<dbReference type="PharmGKB" id="PA134883693"/>
<dbReference type="VEuPathDB" id="HostDB:ENSG00000204475"/>
<dbReference type="eggNOG" id="ENOG502SGFD">
    <property type="taxonomic scope" value="Eukaryota"/>
</dbReference>
<dbReference type="GeneTree" id="ENSGT00390000006603"/>
<dbReference type="HOGENOM" id="CLU_132406_0_0_1"/>
<dbReference type="InParanoid" id="O14931"/>
<dbReference type="OMA" id="WDIRGRD"/>
<dbReference type="OrthoDB" id="9950892at2759"/>
<dbReference type="PAN-GO" id="O14931">
    <property type="GO annotations" value="3 GO annotations based on evolutionary models"/>
</dbReference>
<dbReference type="PhylomeDB" id="O14931"/>
<dbReference type="TreeFam" id="TF337790"/>
<dbReference type="PathwayCommons" id="O14931"/>
<dbReference type="Reactome" id="R-HSA-198933">
    <property type="pathway name" value="Immunoregulatory interactions between a Lymphoid and a non-Lymphoid cell"/>
</dbReference>
<dbReference type="SignaLink" id="O14931"/>
<dbReference type="BioGRID-ORCS" id="259197">
    <property type="hits" value="12 hits in 1147 CRISPR screens"/>
</dbReference>
<dbReference type="EvolutionaryTrace" id="O14931"/>
<dbReference type="GeneWiki" id="NCR3"/>
<dbReference type="GenomeRNAi" id="259197"/>
<dbReference type="Pharos" id="O14931">
    <property type="development level" value="Tbio"/>
</dbReference>
<dbReference type="PRO" id="PR:O14931"/>
<dbReference type="Proteomes" id="UP000005640">
    <property type="component" value="Chromosome 6"/>
</dbReference>
<dbReference type="RNAct" id="O14931">
    <property type="molecule type" value="protein"/>
</dbReference>
<dbReference type="Bgee" id="ENSG00000204475">
    <property type="expression patterns" value="Expressed in granulocyte and 91 other cell types or tissues"/>
</dbReference>
<dbReference type="ExpressionAtlas" id="O14931">
    <property type="expression patterns" value="baseline and differential"/>
</dbReference>
<dbReference type="GO" id="GO:0005886">
    <property type="term" value="C:plasma membrane"/>
    <property type="evidence" value="ECO:0000314"/>
    <property type="project" value="UniProt"/>
</dbReference>
<dbReference type="GO" id="GO:0042802">
    <property type="term" value="F:identical protein binding"/>
    <property type="evidence" value="ECO:0000353"/>
    <property type="project" value="IntAct"/>
</dbReference>
<dbReference type="GO" id="GO:0140375">
    <property type="term" value="F:immune receptor activity"/>
    <property type="evidence" value="ECO:0000314"/>
    <property type="project" value="UniProt"/>
</dbReference>
<dbReference type="GO" id="GO:0008037">
    <property type="term" value="P:cell recognition"/>
    <property type="evidence" value="ECO:0000304"/>
    <property type="project" value="BHF-UCL"/>
</dbReference>
<dbReference type="GO" id="GO:0006955">
    <property type="term" value="P:immune response"/>
    <property type="evidence" value="ECO:0000303"/>
    <property type="project" value="UniProtKB"/>
</dbReference>
<dbReference type="GO" id="GO:0002429">
    <property type="term" value="P:immune response-activating cell surface receptor signaling pathway"/>
    <property type="evidence" value="ECO:0000314"/>
    <property type="project" value="UniProtKB"/>
</dbReference>
<dbReference type="GO" id="GO:0006954">
    <property type="term" value="P:inflammatory response"/>
    <property type="evidence" value="ECO:0000303"/>
    <property type="project" value="UniProtKB"/>
</dbReference>
<dbReference type="GO" id="GO:0030101">
    <property type="term" value="P:natural killer cell activation"/>
    <property type="evidence" value="ECO:0000314"/>
    <property type="project" value="UniProtKB"/>
</dbReference>
<dbReference type="GO" id="GO:0051132">
    <property type="term" value="P:NK T cell activation"/>
    <property type="evidence" value="ECO:0000314"/>
    <property type="project" value="UniProt"/>
</dbReference>
<dbReference type="GO" id="GO:0045954">
    <property type="term" value="P:positive regulation of natural killer cell mediated cytotoxicity"/>
    <property type="evidence" value="ECO:0000315"/>
    <property type="project" value="BHF-UCL"/>
</dbReference>
<dbReference type="CDD" id="cd20926">
    <property type="entry name" value="IgV_NKp30"/>
    <property type="match status" value="1"/>
</dbReference>
<dbReference type="FunFam" id="2.60.40.10:FF:000860">
    <property type="entry name" value="natural cytotoxicity triggering receptor 3"/>
    <property type="match status" value="1"/>
</dbReference>
<dbReference type="Gene3D" id="2.60.40.10">
    <property type="entry name" value="Immunoglobulins"/>
    <property type="match status" value="1"/>
</dbReference>
<dbReference type="InterPro" id="IPR007110">
    <property type="entry name" value="Ig-like_dom"/>
</dbReference>
<dbReference type="InterPro" id="IPR036179">
    <property type="entry name" value="Ig-like_dom_sf"/>
</dbReference>
<dbReference type="InterPro" id="IPR013783">
    <property type="entry name" value="Ig-like_fold"/>
</dbReference>
<dbReference type="InterPro" id="IPR003599">
    <property type="entry name" value="Ig_sub"/>
</dbReference>
<dbReference type="InterPro" id="IPR013106">
    <property type="entry name" value="Ig_V-set"/>
</dbReference>
<dbReference type="InterPro" id="IPR043226">
    <property type="entry name" value="NCR3"/>
</dbReference>
<dbReference type="PANTHER" id="PTHR47904">
    <property type="entry name" value="NATURAL CYTOTOXICITY TRIGGERING RECEPTOR 3"/>
    <property type="match status" value="1"/>
</dbReference>
<dbReference type="PANTHER" id="PTHR47904:SF1">
    <property type="entry name" value="NATURAL CYTOTOXICITY TRIGGERING RECEPTOR 3"/>
    <property type="match status" value="1"/>
</dbReference>
<dbReference type="Pfam" id="PF07686">
    <property type="entry name" value="V-set"/>
    <property type="match status" value="1"/>
</dbReference>
<dbReference type="SMART" id="SM00409">
    <property type="entry name" value="IG"/>
    <property type="match status" value="1"/>
</dbReference>
<dbReference type="SUPFAM" id="SSF48726">
    <property type="entry name" value="Immunoglobulin"/>
    <property type="match status" value="1"/>
</dbReference>
<dbReference type="PROSITE" id="PS50835">
    <property type="entry name" value="IG_LIKE"/>
    <property type="match status" value="1"/>
</dbReference>
<proteinExistence type="evidence at protein level"/>
<comment type="function">
    <text evidence="3 4 6 7 11">Cell membrane receptor of natural killer/NK cells that is activated by binding of extracellular ligands including BAG6 and NCR3LG1. Stimulates NK cells cytotoxicity toward neighboring cells producing these ligands. It controls, for instance, NK cells cytotoxicity against tumor cells. Engagement of NCR3 by BAG6 also promotes myeloid dendritic cells (DC) maturation, both through killing DCs that did not acquire a mature phenotype, and inducing the release by NK cells of TNFA and IFNG which promote DC maturation.</text>
</comment>
<comment type="subunit">
    <text evidence="3 6 7 8 9 10 11 12">Homodimer in the unliganted form (PubMed:21422170, PubMed:21444796). Interacts with CD3Z (PubMed:10562324, Ref.2). Interacts with and is activated by binding to NCR3LG1 (PubMed:19528259, PubMed:21422170, PubMed:21444796). Interacts with and is activated by binding to BAG6 (PubMed:18055229, PubMed:18852879). Interacts with and is inhibited by binding to LGALS3 (PubMed:25315772).</text>
</comment>
<comment type="interaction">
    <interactant intactId="EBI-14989262">
        <id>O14931</id>
    </interactant>
    <interactant intactId="EBI-347552">
        <id>P46379</id>
        <label>BAG6</label>
    </interactant>
    <organismsDiffer>false</organismsDiffer>
    <experiments>6</experiments>
</comment>
<comment type="interaction">
    <interactant intactId="EBI-14989262">
        <id>O14931</id>
    </interactant>
    <interactant intactId="EBI-18304435">
        <id>Q5JX71</id>
        <label>FAM209A</label>
    </interactant>
    <organismsDiffer>false</organismsDiffer>
    <experiments>3</experiments>
</comment>
<comment type="interaction">
    <interactant intactId="EBI-14989262">
        <id>O14931</id>
    </interactant>
    <interactant intactId="EBI-1170392">
        <id>P17931</id>
        <label>LGALS3</label>
    </interactant>
    <organismsDiffer>false</organismsDiffer>
    <experiments>2</experiments>
</comment>
<comment type="interaction">
    <interactant intactId="EBI-14989262">
        <id>O14931</id>
    </interactant>
    <interactant intactId="EBI-14989262">
        <id>O14931</id>
        <label>NCR3</label>
    </interactant>
    <organismsDiffer>false</organismsDiffer>
    <experiments>9</experiments>
</comment>
<comment type="interaction">
    <interactant intactId="EBI-14989262">
        <id>O14931</id>
    </interactant>
    <interactant intactId="EBI-14061804">
        <id>Q68D85</id>
        <label>NCR3LG1</label>
    </interactant>
    <organismsDiffer>false</organismsDiffer>
    <experiments>16</experiments>
</comment>
<comment type="interaction">
    <interactant intactId="EBI-15013584">
        <id>O14931-1</id>
    </interactant>
    <interactant intactId="EBI-9640181">
        <id>P46379-1</id>
        <label>BAG6</label>
    </interactant>
    <organismsDiffer>false</organismsDiffer>
    <experiments>5</experiments>
</comment>
<comment type="interaction">
    <interactant intactId="EBI-15013584">
        <id>O14931-1</id>
    </interactant>
    <interactant intactId="EBI-10988864">
        <id>P46379-2</id>
        <label>BAG6</label>
    </interactant>
    <organismsDiffer>false</organismsDiffer>
    <experiments>4</experiments>
</comment>
<comment type="interaction">
    <interactant intactId="EBI-15098724">
        <id>O14931-2</id>
    </interactant>
    <interactant intactId="EBI-1170392">
        <id>P17931</id>
        <label>LGALS3</label>
    </interactant>
    <organismsDiffer>false</organismsDiffer>
    <experiments>3</experiments>
</comment>
<comment type="subcellular location">
    <subcellularLocation>
        <location evidence="3">Cell membrane</location>
        <topology evidence="1">Single-pass type I membrane protein</topology>
    </subcellularLocation>
</comment>
<comment type="alternative products">
    <event type="alternative splicing"/>
    <isoform>
        <id>O14931-1</id>
        <name>1</name>
        <name>1C7a</name>
        <sequence type="displayed"/>
    </isoform>
    <isoform>
        <id>O14931-2</id>
        <name>2</name>
        <name>1C7c</name>
        <sequence type="described" ref="VSP_010413"/>
    </isoform>
    <isoform>
        <id>O14931-3</id>
        <name>3</name>
        <name>1C7b</name>
        <sequence type="described" ref="VSP_010412"/>
    </isoform>
    <isoform>
        <id>O14931-4</id>
        <name>4</name>
        <name>1C7e</name>
        <sequence type="described" ref="VSP_010411"/>
    </isoform>
    <isoform>
        <id>O14931-5</id>
        <name>5</name>
        <name>1C7f</name>
        <sequence type="described" ref="VSP_010411 VSP_010413"/>
    </isoform>
    <isoform>
        <id>O14931-6</id>
        <name>6</name>
        <name>1C7d</name>
        <sequence type="described" ref="VSP_010411 VSP_010412"/>
    </isoform>
</comment>
<comment type="tissue specificity">
    <text evidence="3 12">Selectively expressed by all resting and activated NK cells and weakly expressed in spleen.</text>
</comment>
<comment type="polymorphism">
    <text evidence="5">A genetic variation in NCR3 is associated with mild malaria susceptibility [MIM:609148].</text>
</comment>
<comment type="similarity">
    <text evidence="17">Belongs to the natural cytotoxicity receptor (NCR) family.</text>
</comment>
<name>NCTR3_HUMAN</name>
<reference key="1">
    <citation type="journal article" date="1999" name="J. Exp. Med.">
        <title>Identification and molecular characterization of NKp30, a novel triggering receptor involved in natural cytotoxicity mediated by human natural killer cells.</title>
        <authorList>
            <person name="Pende D."/>
            <person name="Parolini S."/>
            <person name="Pessino A."/>
            <person name="Sivori S."/>
            <person name="Augugliaro R."/>
            <person name="Morelli L."/>
            <person name="Marcenaro E."/>
            <person name="Accame L."/>
            <person name="Malaspina A."/>
            <person name="Biassoni R."/>
            <person name="Bottino C."/>
            <person name="Moretta L."/>
            <person name="Moretta A."/>
        </authorList>
    </citation>
    <scope>NUCLEOTIDE SEQUENCE [MRNA] (ISOFORM 2)</scope>
    <scope>SUBCELLULAR LOCATION</scope>
    <scope>TISSUE SPECIFICITY</scope>
    <scope>INTERACTION WITH CD3Z</scope>
    <scope>FUNCTION</scope>
    <source>
        <tissue>Lymphoid tissue</tissue>
    </source>
</reference>
<reference key="2">
    <citation type="submission" date="2001-02" db="EMBL/GenBank/DDBJ databases">
        <title>Identification of two novel single nucleotide polymorphisms in the NKp30 gene in human natural killer cells.</title>
        <authorList>
            <person name="Sato M."/>
            <person name="Yabe T."/>
            <person name="Ohashi J."/>
            <person name="Tsuchiya N."/>
            <person name="Hanaoka K."/>
            <person name="Tokunaga K."/>
            <person name="Juji T."/>
        </authorList>
    </citation>
    <scope>NUCLEOTIDE SEQUENCE [MRNA] (ISOFORM 2)</scope>
    <scope>TISSUE SPECIFICITY</scope>
    <scope>INTERACTION WITH CD3Z</scope>
    <source>
        <tissue>Peripheral blood</tissue>
    </source>
</reference>
<reference key="3">
    <citation type="journal article" date="1999" name="J. Immunol.">
        <title>A new member of the Ig superfamily and a V-ATPase G subunit are among the predicted products of novel genes close to the TNF locus in the human MHC.</title>
        <authorList>
            <person name="Neville M.J."/>
            <person name="Campbell R.D."/>
        </authorList>
    </citation>
    <scope>NUCLEOTIDE SEQUENCE [MRNA] (ISOFORMS 1; 2; 3; 4; 5 AND 6)</scope>
</reference>
<reference key="4">
    <citation type="journal article" date="1996" name="Genomics">
        <title>Genes in a 220-kb region spanning the TNF cluster in human MHC.</title>
        <authorList>
            <person name="Nalabolu S.R."/>
            <person name="Shukla H."/>
            <person name="Nallur G."/>
            <person name="Parimoo S."/>
            <person name="Weissman S.M."/>
        </authorList>
    </citation>
    <scope>NUCLEOTIDE SEQUENCE [MRNA] (ISOFORMS 1; 2 AND 3)</scope>
    <source>
        <tissue>Spleen</tissue>
    </source>
</reference>
<reference key="5">
    <citation type="journal article" date="2003" name="Genome Res.">
        <title>Analysis of the gene-dense major histocompatibility complex class III region and its comparison to mouse.</title>
        <authorList>
            <person name="Xie T."/>
            <person name="Rowen L."/>
            <person name="Aguado B."/>
            <person name="Ahearn M.E."/>
            <person name="Madan A."/>
            <person name="Qin S."/>
            <person name="Campbell R.D."/>
            <person name="Hood L."/>
        </authorList>
    </citation>
    <scope>NUCLEOTIDE SEQUENCE [LARGE SCALE GENOMIC DNA]</scope>
</reference>
<reference key="6">
    <citation type="submission" date="2005-07" db="EMBL/GenBank/DDBJ databases">
        <authorList>
            <person name="Mural R.J."/>
            <person name="Istrail S."/>
            <person name="Sutton G.G."/>
            <person name="Florea L."/>
            <person name="Halpern A.L."/>
            <person name="Mobarry C.M."/>
            <person name="Lippert R."/>
            <person name="Walenz B."/>
            <person name="Shatkay H."/>
            <person name="Dew I."/>
            <person name="Miller J.R."/>
            <person name="Flanigan M.J."/>
            <person name="Edwards N.J."/>
            <person name="Bolanos R."/>
            <person name="Fasulo D."/>
            <person name="Halldorsson B.V."/>
            <person name="Hannenhalli S."/>
            <person name="Turner R."/>
            <person name="Yooseph S."/>
            <person name="Lu F."/>
            <person name="Nusskern D.R."/>
            <person name="Shue B.C."/>
            <person name="Zheng X.H."/>
            <person name="Zhong F."/>
            <person name="Delcher A.L."/>
            <person name="Huson D.H."/>
            <person name="Kravitz S.A."/>
            <person name="Mouchard L."/>
            <person name="Reinert K."/>
            <person name="Remington K.A."/>
            <person name="Clark A.G."/>
            <person name="Waterman M.S."/>
            <person name="Eichler E.E."/>
            <person name="Adams M.D."/>
            <person name="Hunkapiller M.W."/>
            <person name="Myers E.W."/>
            <person name="Venter J.C."/>
        </authorList>
    </citation>
    <scope>NUCLEOTIDE SEQUENCE [LARGE SCALE GENOMIC DNA]</scope>
</reference>
<reference key="7">
    <citation type="submission" date="1999-09" db="EMBL/GenBank/DDBJ databases">
        <title>Homo sapiens 2,229,817bp genomic DNA of 6p21.3 HLA class I region.</title>
        <authorList>
            <person name="Shiina S."/>
            <person name="Tamiya G."/>
            <person name="Oka A."/>
            <person name="Inoko H."/>
        </authorList>
    </citation>
    <scope>NUCLEOTIDE SEQUENCE [LARGE SCALE GENOMIC DNA]</scope>
</reference>
<reference key="8">
    <citation type="journal article" date="2003" name="Nature">
        <title>The DNA sequence and analysis of human chromosome 6.</title>
        <authorList>
            <person name="Mungall A.J."/>
            <person name="Palmer S.A."/>
            <person name="Sims S.K."/>
            <person name="Edwards C.A."/>
            <person name="Ashurst J.L."/>
            <person name="Wilming L."/>
            <person name="Jones M.C."/>
            <person name="Horton R."/>
            <person name="Hunt S.E."/>
            <person name="Scott C.E."/>
            <person name="Gilbert J.G.R."/>
            <person name="Clamp M.E."/>
            <person name="Bethel G."/>
            <person name="Milne S."/>
            <person name="Ainscough R."/>
            <person name="Almeida J.P."/>
            <person name="Ambrose K.D."/>
            <person name="Andrews T.D."/>
            <person name="Ashwell R.I.S."/>
            <person name="Babbage A.K."/>
            <person name="Bagguley C.L."/>
            <person name="Bailey J."/>
            <person name="Banerjee R."/>
            <person name="Barker D.J."/>
            <person name="Barlow K.F."/>
            <person name="Bates K."/>
            <person name="Beare D.M."/>
            <person name="Beasley H."/>
            <person name="Beasley O."/>
            <person name="Bird C.P."/>
            <person name="Blakey S.E."/>
            <person name="Bray-Allen S."/>
            <person name="Brook J."/>
            <person name="Brown A.J."/>
            <person name="Brown J.Y."/>
            <person name="Burford D.C."/>
            <person name="Burrill W."/>
            <person name="Burton J."/>
            <person name="Carder C."/>
            <person name="Carter N.P."/>
            <person name="Chapman J.C."/>
            <person name="Clark S.Y."/>
            <person name="Clark G."/>
            <person name="Clee C.M."/>
            <person name="Clegg S."/>
            <person name="Cobley V."/>
            <person name="Collier R.E."/>
            <person name="Collins J.E."/>
            <person name="Colman L.K."/>
            <person name="Corby N.R."/>
            <person name="Coville G.J."/>
            <person name="Culley K.M."/>
            <person name="Dhami P."/>
            <person name="Davies J."/>
            <person name="Dunn M."/>
            <person name="Earthrowl M.E."/>
            <person name="Ellington A.E."/>
            <person name="Evans K.A."/>
            <person name="Faulkner L."/>
            <person name="Francis M.D."/>
            <person name="Frankish A."/>
            <person name="Frankland J."/>
            <person name="French L."/>
            <person name="Garner P."/>
            <person name="Garnett J."/>
            <person name="Ghori M.J."/>
            <person name="Gilby L.M."/>
            <person name="Gillson C.J."/>
            <person name="Glithero R.J."/>
            <person name="Grafham D.V."/>
            <person name="Grant M."/>
            <person name="Gribble S."/>
            <person name="Griffiths C."/>
            <person name="Griffiths M.N.D."/>
            <person name="Hall R."/>
            <person name="Halls K.S."/>
            <person name="Hammond S."/>
            <person name="Harley J.L."/>
            <person name="Hart E.A."/>
            <person name="Heath P.D."/>
            <person name="Heathcott R."/>
            <person name="Holmes S.J."/>
            <person name="Howden P.J."/>
            <person name="Howe K.L."/>
            <person name="Howell G.R."/>
            <person name="Huckle E."/>
            <person name="Humphray S.J."/>
            <person name="Humphries M.D."/>
            <person name="Hunt A.R."/>
            <person name="Johnson C.M."/>
            <person name="Joy A.A."/>
            <person name="Kay M."/>
            <person name="Keenan S.J."/>
            <person name="Kimberley A.M."/>
            <person name="King A."/>
            <person name="Laird G.K."/>
            <person name="Langford C."/>
            <person name="Lawlor S."/>
            <person name="Leongamornlert D.A."/>
            <person name="Leversha M."/>
            <person name="Lloyd C.R."/>
            <person name="Lloyd D.M."/>
            <person name="Loveland J.E."/>
            <person name="Lovell J."/>
            <person name="Martin S."/>
            <person name="Mashreghi-Mohammadi M."/>
            <person name="Maslen G.L."/>
            <person name="Matthews L."/>
            <person name="McCann O.T."/>
            <person name="McLaren S.J."/>
            <person name="McLay K."/>
            <person name="McMurray A."/>
            <person name="Moore M.J.F."/>
            <person name="Mullikin J.C."/>
            <person name="Niblett D."/>
            <person name="Nickerson T."/>
            <person name="Novik K.L."/>
            <person name="Oliver K."/>
            <person name="Overton-Larty E.K."/>
            <person name="Parker A."/>
            <person name="Patel R."/>
            <person name="Pearce A.V."/>
            <person name="Peck A.I."/>
            <person name="Phillimore B.J.C.T."/>
            <person name="Phillips S."/>
            <person name="Plumb R.W."/>
            <person name="Porter K.M."/>
            <person name="Ramsey Y."/>
            <person name="Ranby S.A."/>
            <person name="Rice C.M."/>
            <person name="Ross M.T."/>
            <person name="Searle S.M."/>
            <person name="Sehra H.K."/>
            <person name="Sheridan E."/>
            <person name="Skuce C.D."/>
            <person name="Smith S."/>
            <person name="Smith M."/>
            <person name="Spraggon L."/>
            <person name="Squares S.L."/>
            <person name="Steward C.A."/>
            <person name="Sycamore N."/>
            <person name="Tamlyn-Hall G."/>
            <person name="Tester J."/>
            <person name="Theaker A.J."/>
            <person name="Thomas D.W."/>
            <person name="Thorpe A."/>
            <person name="Tracey A."/>
            <person name="Tromans A."/>
            <person name="Tubby B."/>
            <person name="Wall M."/>
            <person name="Wallis J.M."/>
            <person name="West A.P."/>
            <person name="White S.S."/>
            <person name="Whitehead S.L."/>
            <person name="Whittaker H."/>
            <person name="Wild A."/>
            <person name="Willey D.J."/>
            <person name="Wilmer T.E."/>
            <person name="Wood J.M."/>
            <person name="Wray P.W."/>
            <person name="Wyatt J.C."/>
            <person name="Young L."/>
            <person name="Younger R.M."/>
            <person name="Bentley D.R."/>
            <person name="Coulson A."/>
            <person name="Durbin R.M."/>
            <person name="Hubbard T."/>
            <person name="Sulston J.E."/>
            <person name="Dunham I."/>
            <person name="Rogers J."/>
            <person name="Beck S."/>
        </authorList>
    </citation>
    <scope>NUCLEOTIDE SEQUENCE [LARGE SCALE GENOMIC DNA]</scope>
</reference>
<reference key="9">
    <citation type="journal article" date="2004" name="Genome Res.">
        <title>The status, quality, and expansion of the NIH full-length cDNA project: the Mammalian Gene Collection (MGC).</title>
        <authorList>
            <consortium name="The MGC Project Team"/>
        </authorList>
    </citation>
    <scope>NUCLEOTIDE SEQUENCE [LARGE SCALE MRNA] (ISOFORM 1)</scope>
    <source>
        <tissue>Blood</tissue>
    </source>
</reference>
<reference key="10">
    <citation type="journal article" date="2005" name="Blood">
        <title>NK-dependent DC maturation is mediated by TNFalpha and IFNgamma released upon engagement of the NKp30 triggering receptor.</title>
        <authorList>
            <person name="Vitale M."/>
            <person name="Della Chiesa M."/>
            <person name="Carlomagno S."/>
            <person name="Pende D."/>
            <person name="Arico M."/>
            <person name="Moretta L."/>
            <person name="Moretta A."/>
        </authorList>
    </citation>
    <scope>FUNCTION IN DENDRITIC CELLS MATURATION</scope>
</reference>
<reference key="11">
    <citation type="journal article" date="2007" name="Immunity">
        <title>Human leukocyte antigen-B-associated transcript 3 is released from tumor cells and engages the NKp30 receptor on natural killer cells.</title>
        <authorList>
            <person name="Pogge von Strandmann E."/>
            <person name="Simhadri V.R."/>
            <person name="von Tresckow B."/>
            <person name="Sasse S."/>
            <person name="Reiners K.S."/>
            <person name="Hansen H.P."/>
            <person name="Rothe A."/>
            <person name="Boll B."/>
            <person name="Simhadri V.L."/>
            <person name="Borchmann P."/>
            <person name="McKinnon P.J."/>
            <person name="Hallek M."/>
            <person name="Engert A."/>
        </authorList>
    </citation>
    <scope>FUNCTION</scope>
    <scope>INTERACTION WITH BAG6</scope>
</reference>
<reference key="12">
    <citation type="journal article" date="2007" name="Microbes Infect.">
        <title>Association analyses of NCR3 polymorphisms with P. falciparum mild malaria.</title>
        <authorList>
            <person name="Delahaye N.F."/>
            <person name="Barbier M."/>
            <person name="Fumoux F."/>
            <person name="Rihet P."/>
        </authorList>
    </citation>
    <scope>INVOLVEMENT IN SUSCEPTIBILITY TO MILD MALARIA</scope>
</reference>
<reference key="13">
    <citation type="journal article" date="2008" name="PLoS ONE">
        <title>Dendritic cells release HLA-B-associated transcript-3 positive exosomes to regulate natural killer function.</title>
        <authorList>
            <person name="Simhadri V.R."/>
            <person name="Reiners K.S."/>
            <person name="Hansen H.P."/>
            <person name="Topolar D."/>
            <person name="Simhadri V.L."/>
            <person name="Nohroudi K."/>
            <person name="Kufer T.A."/>
            <person name="Engert A."/>
            <person name="Pogge von Strandmann E."/>
        </authorList>
    </citation>
    <scope>FUNCTION IN DENDRITIC CELLS MATURATION</scope>
    <scope>INTERACTION WITH BAG6</scope>
</reference>
<reference key="14">
    <citation type="journal article" date="2009" name="J. Exp. Med.">
        <title>The B7 family member B7-H6 is a tumor cell ligand for the activating natural killer cell receptor NKp30 in humans.</title>
        <authorList>
            <person name="Brandt C.S."/>
            <person name="Baratin M."/>
            <person name="Yi E.C."/>
            <person name="Kennedy J."/>
            <person name="Gao Z."/>
            <person name="Fox B."/>
            <person name="Haldeman B."/>
            <person name="Ostrander C.D."/>
            <person name="Kaifu T."/>
            <person name="Chabannon C."/>
            <person name="Moretta A."/>
            <person name="West R."/>
            <person name="Xu W."/>
            <person name="Vivier E."/>
            <person name="Levin S.D."/>
        </authorList>
    </citation>
    <scope>INTERACTION WITH NCR3LG1</scope>
</reference>
<reference key="15">
    <citation type="journal article" date="2014" name="J. Biol. Chem.">
        <title>Tumor-released Galectin-3, a soluble inhibitory ligand of human NKp30, plays an important role in tumor escape from NK cell attack.</title>
        <authorList>
            <person name="Wang W."/>
            <person name="Guo H."/>
            <person name="Geng J."/>
            <person name="Zheng X."/>
            <person name="Wei H."/>
            <person name="Sun R."/>
            <person name="Tian Z."/>
        </authorList>
    </citation>
    <scope>FUNCTION</scope>
    <scope>INTERACTION WITH LGALS3</scope>
</reference>
<reference key="16">
    <citation type="journal article" date="2011" name="J. Exp. Med.">
        <title>Structure of the human activating natural cytotoxicity receptor NKp30 bound to its tumor cell ligand B7-H6.</title>
        <authorList>
            <person name="Li Y."/>
            <person name="Wang Q."/>
            <person name="Mariuzza R.A."/>
        </authorList>
    </citation>
    <scope>X-RAY CRYSTALLOGRAPHY (2.3 ANGSTROMS) OF 19-135 IN COMPLEX WITH NCR3LG1</scope>
    <scope>SUBUNIT</scope>
    <scope>DISULFIDE BOND</scope>
</reference>
<reference key="17">
    <citation type="journal article" date="2011" name="Proc. Natl. Acad. Sci. U.S.A.">
        <title>Crystal structure of human natural cytotoxicity receptor NKp30 and identification of its ligand binding site.</title>
        <authorList>
            <person name="Joyce M.G."/>
            <person name="Tran P."/>
            <person name="Zhuravleva M.A."/>
            <person name="Jaw J."/>
            <person name="Colonna M."/>
            <person name="Sun P.D."/>
        </authorList>
    </citation>
    <scope>X-RAY CRYSTALLOGRAPHY (1.84 ANGSTROMS) OF 18-130</scope>
    <scope>INTERACTION WITH NCR3LG1</scope>
    <scope>SUBUNIT</scope>
    <scope>DISULFIDE BOND</scope>
</reference>
<evidence type="ECO:0000255" key="1"/>
<evidence type="ECO:0000255" key="2">
    <source>
        <dbReference type="PROSITE-ProRule" id="PRU00114"/>
    </source>
</evidence>
<evidence type="ECO:0000269" key="3">
    <source>
    </source>
</evidence>
<evidence type="ECO:0000269" key="4">
    <source>
    </source>
</evidence>
<evidence type="ECO:0000269" key="5">
    <source>
    </source>
</evidence>
<evidence type="ECO:0000269" key="6">
    <source>
    </source>
</evidence>
<evidence type="ECO:0000269" key="7">
    <source>
    </source>
</evidence>
<evidence type="ECO:0000269" key="8">
    <source>
    </source>
</evidence>
<evidence type="ECO:0000269" key="9">
    <source>
    </source>
</evidence>
<evidence type="ECO:0000269" key="10">
    <source>
    </source>
</evidence>
<evidence type="ECO:0000269" key="11">
    <source>
    </source>
</evidence>
<evidence type="ECO:0000269" key="12">
    <source ref="2"/>
</evidence>
<evidence type="ECO:0000303" key="13">
    <source>
    </source>
</evidence>
<evidence type="ECO:0000303" key="14">
    <source>
    </source>
</evidence>
<evidence type="ECO:0000303" key="15">
    <source>
    </source>
</evidence>
<evidence type="ECO:0000303" key="16">
    <source ref="2"/>
</evidence>
<evidence type="ECO:0000305" key="17"/>
<evidence type="ECO:0000312" key="18">
    <source>
        <dbReference type="HGNC" id="HGNC:19077"/>
    </source>
</evidence>
<evidence type="ECO:0007829" key="19">
    <source>
        <dbReference type="PDB" id="3NOI"/>
    </source>
</evidence>
<evidence type="ECO:0007829" key="20">
    <source>
        <dbReference type="PDB" id="3PV6"/>
    </source>
</evidence>
<gene>
    <name evidence="18" type="primary">NCR3</name>
    <name type="synonym">1C7</name>
    <name type="synonym">LY117</name>
</gene>